<comment type="function">
    <text evidence="1">One of two assembly initiator proteins, it binds directly to the 5'-end of the 23S rRNA, where it nucleates assembly of the 50S subunit.</text>
</comment>
<comment type="function">
    <text evidence="1">One of the proteins that surrounds the polypeptide exit tunnel on the outside of the subunit.</text>
</comment>
<comment type="subunit">
    <text evidence="1">Part of the 50S ribosomal subunit.</text>
</comment>
<comment type="similarity">
    <text evidence="1">Belongs to the universal ribosomal protein uL24 family.</text>
</comment>
<comment type="sequence caution" evidence="2">
    <conflict type="erroneous initiation">
        <sequence resource="EMBL-CDS" id="CAE10732"/>
    </conflict>
</comment>
<evidence type="ECO:0000255" key="1">
    <source>
        <dbReference type="HAMAP-Rule" id="MF_01326"/>
    </source>
</evidence>
<evidence type="ECO:0000305" key="2"/>
<name>RL24_WOLSU</name>
<accession>Q7M8E4</accession>
<gene>
    <name evidence="1" type="primary">rplX</name>
    <name type="ordered locus">WS1705</name>
</gene>
<dbReference type="EMBL" id="BX571661">
    <property type="protein sequence ID" value="CAE10732.1"/>
    <property type="status" value="ALT_INIT"/>
    <property type="molecule type" value="Genomic_DNA"/>
</dbReference>
<dbReference type="RefSeq" id="WP_041571873.1">
    <property type="nucleotide sequence ID" value="NC_005090.1"/>
</dbReference>
<dbReference type="SMR" id="Q7M8E4"/>
<dbReference type="STRING" id="273121.WS1705"/>
<dbReference type="KEGG" id="wsu:WS1705"/>
<dbReference type="eggNOG" id="COG0198">
    <property type="taxonomic scope" value="Bacteria"/>
</dbReference>
<dbReference type="HOGENOM" id="CLU_093315_3_0_7"/>
<dbReference type="Proteomes" id="UP000000422">
    <property type="component" value="Chromosome"/>
</dbReference>
<dbReference type="GO" id="GO:1990904">
    <property type="term" value="C:ribonucleoprotein complex"/>
    <property type="evidence" value="ECO:0007669"/>
    <property type="project" value="UniProtKB-KW"/>
</dbReference>
<dbReference type="GO" id="GO:0005840">
    <property type="term" value="C:ribosome"/>
    <property type="evidence" value="ECO:0007669"/>
    <property type="project" value="UniProtKB-KW"/>
</dbReference>
<dbReference type="GO" id="GO:0019843">
    <property type="term" value="F:rRNA binding"/>
    <property type="evidence" value="ECO:0007669"/>
    <property type="project" value="UniProtKB-UniRule"/>
</dbReference>
<dbReference type="GO" id="GO:0003735">
    <property type="term" value="F:structural constituent of ribosome"/>
    <property type="evidence" value="ECO:0007669"/>
    <property type="project" value="InterPro"/>
</dbReference>
<dbReference type="GO" id="GO:0006412">
    <property type="term" value="P:translation"/>
    <property type="evidence" value="ECO:0007669"/>
    <property type="project" value="UniProtKB-UniRule"/>
</dbReference>
<dbReference type="CDD" id="cd06089">
    <property type="entry name" value="KOW_RPL26"/>
    <property type="match status" value="1"/>
</dbReference>
<dbReference type="Gene3D" id="2.30.30.30">
    <property type="match status" value="1"/>
</dbReference>
<dbReference type="HAMAP" id="MF_01326_B">
    <property type="entry name" value="Ribosomal_uL24_B"/>
    <property type="match status" value="1"/>
</dbReference>
<dbReference type="InterPro" id="IPR005824">
    <property type="entry name" value="KOW"/>
</dbReference>
<dbReference type="InterPro" id="IPR014722">
    <property type="entry name" value="Rib_uL2_dom2"/>
</dbReference>
<dbReference type="InterPro" id="IPR003256">
    <property type="entry name" value="Ribosomal_uL24"/>
</dbReference>
<dbReference type="InterPro" id="IPR005825">
    <property type="entry name" value="Ribosomal_uL24_CS"/>
</dbReference>
<dbReference type="InterPro" id="IPR041988">
    <property type="entry name" value="Ribosomal_uL24_KOW"/>
</dbReference>
<dbReference type="InterPro" id="IPR008991">
    <property type="entry name" value="Translation_prot_SH3-like_sf"/>
</dbReference>
<dbReference type="NCBIfam" id="TIGR01079">
    <property type="entry name" value="rplX_bact"/>
    <property type="match status" value="1"/>
</dbReference>
<dbReference type="PANTHER" id="PTHR12903">
    <property type="entry name" value="MITOCHONDRIAL RIBOSOMAL PROTEIN L24"/>
    <property type="match status" value="1"/>
</dbReference>
<dbReference type="Pfam" id="PF00467">
    <property type="entry name" value="KOW"/>
    <property type="match status" value="1"/>
</dbReference>
<dbReference type="Pfam" id="PF17136">
    <property type="entry name" value="ribosomal_L24"/>
    <property type="match status" value="1"/>
</dbReference>
<dbReference type="SMART" id="SM00739">
    <property type="entry name" value="KOW"/>
    <property type="match status" value="1"/>
</dbReference>
<dbReference type="SUPFAM" id="SSF50104">
    <property type="entry name" value="Translation proteins SH3-like domain"/>
    <property type="match status" value="1"/>
</dbReference>
<dbReference type="PROSITE" id="PS01108">
    <property type="entry name" value="RIBOSOMAL_L24"/>
    <property type="match status" value="1"/>
</dbReference>
<organism>
    <name type="scientific">Wolinella succinogenes (strain ATCC 29543 / DSM 1740 / CCUG 13145 / JCM 31913 / LMG 7466 / NCTC 11488 / FDC 602W)</name>
    <name type="common">Vibrio succinogenes</name>
    <dbReference type="NCBI Taxonomy" id="273121"/>
    <lineage>
        <taxon>Bacteria</taxon>
        <taxon>Pseudomonadati</taxon>
        <taxon>Campylobacterota</taxon>
        <taxon>Epsilonproteobacteria</taxon>
        <taxon>Campylobacterales</taxon>
        <taxon>Helicobacteraceae</taxon>
        <taxon>Wolinella</taxon>
    </lineage>
</organism>
<protein>
    <recommendedName>
        <fullName evidence="1">Large ribosomal subunit protein uL24</fullName>
    </recommendedName>
    <alternativeName>
        <fullName evidence="2">50S ribosomal protein L24</fullName>
    </alternativeName>
</protein>
<sequence>MVKFQIKKGDKVQVIAGDDKGKVAEVIKVMPKSSQVIVAGCKVAKKSVKPSEQNPKGGFVNKEMPIHISNVKKVEA</sequence>
<proteinExistence type="inferred from homology"/>
<feature type="chain" id="PRO_0000130753" description="Large ribosomal subunit protein uL24">
    <location>
        <begin position="1"/>
        <end position="76"/>
    </location>
</feature>
<reference key="1">
    <citation type="journal article" date="2003" name="Proc. Natl. Acad. Sci. U.S.A.">
        <title>Complete genome sequence and analysis of Wolinella succinogenes.</title>
        <authorList>
            <person name="Baar C."/>
            <person name="Eppinger M."/>
            <person name="Raddatz G."/>
            <person name="Simon J."/>
            <person name="Lanz C."/>
            <person name="Klimmek O."/>
            <person name="Nandakumar R."/>
            <person name="Gross R."/>
            <person name="Rosinus A."/>
            <person name="Keller H."/>
            <person name="Jagtap P."/>
            <person name="Linke B."/>
            <person name="Meyer F."/>
            <person name="Lederer H."/>
            <person name="Schuster S.C."/>
        </authorList>
    </citation>
    <scope>NUCLEOTIDE SEQUENCE [LARGE SCALE GENOMIC DNA]</scope>
    <source>
        <strain>ATCC 29543 / DSM 1740 / CCUG 13145 / JCM 31913 / LMG 7466 / NCTC 11488 / FDC 602W</strain>
    </source>
</reference>
<keyword id="KW-1185">Reference proteome</keyword>
<keyword id="KW-0687">Ribonucleoprotein</keyword>
<keyword id="KW-0689">Ribosomal protein</keyword>
<keyword id="KW-0694">RNA-binding</keyword>
<keyword id="KW-0699">rRNA-binding</keyword>